<sequence>MKIITCYKCVPDEQDIAVNNADGSLDFSKADAKISQYDLNAIEAACQLKQQAAEAQVTALSVGGKALTNAKGRKDVLSRGPDELIVVIDDQFEQALPQQTASALAAAAQKAGFDLILCGDGSSDLYAQQVGLLVGEILNIPAVNGVSKIISLTADTLTVERELEDETETLSIPLPAVVAVSTDINSPQIPSMKAILGAAKKPVQVWSAADIGFNAEAAWSEQQVAAPKQRERQRIVIEGDGEEQIAAFAENLRKVI</sequence>
<organism>
    <name type="scientific">Escherichia coli (strain K12 / MC4100 / BW2952)</name>
    <dbReference type="NCBI Taxonomy" id="595496"/>
    <lineage>
        <taxon>Bacteria</taxon>
        <taxon>Pseudomonadati</taxon>
        <taxon>Pseudomonadota</taxon>
        <taxon>Gammaproteobacteria</taxon>
        <taxon>Enterobacterales</taxon>
        <taxon>Enterobacteriaceae</taxon>
        <taxon>Escherichia</taxon>
    </lineage>
</organism>
<dbReference type="EMBL" id="CP001396">
    <property type="protein sequence ID" value="ACR64337.1"/>
    <property type="molecule type" value="Genomic_DNA"/>
</dbReference>
<dbReference type="RefSeq" id="WP_000692204.1">
    <property type="nucleotide sequence ID" value="NC_012759.1"/>
</dbReference>
<dbReference type="SMR" id="C4ZPW7"/>
<dbReference type="KEGG" id="ebw:BWG_0039"/>
<dbReference type="HOGENOM" id="CLU_060196_2_2_6"/>
<dbReference type="UniPathway" id="UPA00117"/>
<dbReference type="GO" id="GO:0009055">
    <property type="term" value="F:electron transfer activity"/>
    <property type="evidence" value="ECO:0007669"/>
    <property type="project" value="InterPro"/>
</dbReference>
<dbReference type="GO" id="GO:0009437">
    <property type="term" value="P:carnitine metabolic process"/>
    <property type="evidence" value="ECO:0007669"/>
    <property type="project" value="UniProtKB-UniRule"/>
</dbReference>
<dbReference type="CDD" id="cd01714">
    <property type="entry name" value="ETF_beta"/>
    <property type="match status" value="1"/>
</dbReference>
<dbReference type="FunFam" id="3.40.50.620:FF:000072">
    <property type="entry name" value="Protein FixA homolog"/>
    <property type="match status" value="1"/>
</dbReference>
<dbReference type="Gene3D" id="3.40.50.620">
    <property type="entry name" value="HUPs"/>
    <property type="match status" value="1"/>
</dbReference>
<dbReference type="HAMAP" id="MF_01055">
    <property type="entry name" value="FixA"/>
    <property type="match status" value="1"/>
</dbReference>
<dbReference type="InterPro" id="IPR000049">
    <property type="entry name" value="ET-Flavoprotein_bsu_CS"/>
</dbReference>
<dbReference type="InterPro" id="IPR014730">
    <property type="entry name" value="ETF_a/b_N"/>
</dbReference>
<dbReference type="InterPro" id="IPR012255">
    <property type="entry name" value="ETF_b"/>
</dbReference>
<dbReference type="InterPro" id="IPR033948">
    <property type="entry name" value="ETF_beta_N"/>
</dbReference>
<dbReference type="InterPro" id="IPR023463">
    <property type="entry name" value="FixA"/>
</dbReference>
<dbReference type="InterPro" id="IPR014729">
    <property type="entry name" value="Rossmann-like_a/b/a_fold"/>
</dbReference>
<dbReference type="NCBIfam" id="NF002888">
    <property type="entry name" value="PRK03359.1"/>
    <property type="match status" value="1"/>
</dbReference>
<dbReference type="PANTHER" id="PTHR21294">
    <property type="entry name" value="ELECTRON TRANSFER FLAVOPROTEIN BETA-SUBUNIT"/>
    <property type="match status" value="1"/>
</dbReference>
<dbReference type="PANTHER" id="PTHR21294:SF17">
    <property type="entry name" value="PROTEIN FIXA"/>
    <property type="match status" value="1"/>
</dbReference>
<dbReference type="Pfam" id="PF01012">
    <property type="entry name" value="ETF"/>
    <property type="match status" value="1"/>
</dbReference>
<dbReference type="PIRSF" id="PIRSF000090">
    <property type="entry name" value="Beta-ETF"/>
    <property type="match status" value="1"/>
</dbReference>
<dbReference type="SMART" id="SM00893">
    <property type="entry name" value="ETF"/>
    <property type="match status" value="1"/>
</dbReference>
<dbReference type="SUPFAM" id="SSF52402">
    <property type="entry name" value="Adenine nucleotide alpha hydrolases-like"/>
    <property type="match status" value="1"/>
</dbReference>
<dbReference type="PROSITE" id="PS01065">
    <property type="entry name" value="ETF_BETA"/>
    <property type="match status" value="1"/>
</dbReference>
<reference key="1">
    <citation type="journal article" date="2009" name="J. Bacteriol.">
        <title>Genomic sequencing reveals regulatory mutations and recombinational events in the widely used MC4100 lineage of Escherichia coli K-12.</title>
        <authorList>
            <person name="Ferenci T."/>
            <person name="Zhou Z."/>
            <person name="Betteridge T."/>
            <person name="Ren Y."/>
            <person name="Liu Y."/>
            <person name="Feng L."/>
            <person name="Reeves P.R."/>
            <person name="Wang L."/>
        </authorList>
    </citation>
    <scope>NUCLEOTIDE SEQUENCE [LARGE SCALE GENOMIC DNA]</scope>
    <source>
        <strain>K12 / MC4100 / BW2952</strain>
    </source>
</reference>
<feature type="chain" id="PRO_1000213435" description="Protein FixA">
    <location>
        <begin position="1"/>
        <end position="256"/>
    </location>
</feature>
<proteinExistence type="inferred from homology"/>
<gene>
    <name evidence="1" type="primary">fixA</name>
    <name type="ordered locus">BWG_0039</name>
</gene>
<evidence type="ECO:0000255" key="1">
    <source>
        <dbReference type="HAMAP-Rule" id="MF_01055"/>
    </source>
</evidence>
<name>FIXA_ECOBW</name>
<comment type="function">
    <text evidence="1">Required for anaerobic carnitine reduction. May bring reductant to CaiA.</text>
</comment>
<comment type="pathway">
    <text evidence="1">Amine and polyamine metabolism; carnitine metabolism.</text>
</comment>
<comment type="subunit">
    <text evidence="1">Heterodimer of FixA and FixB.</text>
</comment>
<comment type="similarity">
    <text evidence="1">Belongs to the ETF beta-subunit/FixA family.</text>
</comment>
<accession>C4ZPW7</accession>
<protein>
    <recommendedName>
        <fullName evidence="1">Protein FixA</fullName>
    </recommendedName>
</protein>
<keyword id="KW-0249">Electron transport</keyword>
<keyword id="KW-0813">Transport</keyword>